<proteinExistence type="inferred from homology"/>
<accession>B8E2R2</accession>
<feature type="chain" id="PRO_1000118002" description="Triosephosphate isomerase">
    <location>
        <begin position="1"/>
        <end position="249"/>
    </location>
</feature>
<feature type="active site" description="Electrophile" evidence="1">
    <location>
        <position position="95"/>
    </location>
</feature>
<feature type="active site" description="Proton acceptor" evidence="1">
    <location>
        <position position="167"/>
    </location>
</feature>
<feature type="binding site" evidence="1">
    <location>
        <begin position="9"/>
        <end position="11"/>
    </location>
    <ligand>
        <name>substrate</name>
    </ligand>
</feature>
<feature type="binding site" evidence="1">
    <location>
        <position position="173"/>
    </location>
    <ligand>
        <name>substrate</name>
    </ligand>
</feature>
<feature type="binding site" evidence="1">
    <location>
        <position position="213"/>
    </location>
    <ligand>
        <name>substrate</name>
    </ligand>
</feature>
<feature type="binding site" evidence="1">
    <location>
        <begin position="234"/>
        <end position="235"/>
    </location>
    <ligand>
        <name>substrate</name>
    </ligand>
</feature>
<gene>
    <name evidence="1" type="primary">tpiA</name>
    <name type="ordered locus">Dtur_1133</name>
</gene>
<comment type="function">
    <text evidence="1">Involved in the gluconeogenesis. Catalyzes stereospecifically the conversion of dihydroxyacetone phosphate (DHAP) to D-glyceraldehyde-3-phosphate (G3P).</text>
</comment>
<comment type="catalytic activity">
    <reaction evidence="1">
        <text>D-glyceraldehyde 3-phosphate = dihydroxyacetone phosphate</text>
        <dbReference type="Rhea" id="RHEA:18585"/>
        <dbReference type="ChEBI" id="CHEBI:57642"/>
        <dbReference type="ChEBI" id="CHEBI:59776"/>
        <dbReference type="EC" id="5.3.1.1"/>
    </reaction>
</comment>
<comment type="pathway">
    <text evidence="1">Carbohydrate biosynthesis; gluconeogenesis.</text>
</comment>
<comment type="pathway">
    <text evidence="1">Carbohydrate degradation; glycolysis; D-glyceraldehyde 3-phosphate from glycerone phosphate: step 1/1.</text>
</comment>
<comment type="subunit">
    <text evidence="1">Homodimer.</text>
</comment>
<comment type="subcellular location">
    <subcellularLocation>
        <location evidence="1">Cytoplasm</location>
    </subcellularLocation>
</comment>
<comment type="similarity">
    <text evidence="1">Belongs to the triosephosphate isomerase family.</text>
</comment>
<evidence type="ECO:0000255" key="1">
    <source>
        <dbReference type="HAMAP-Rule" id="MF_00147"/>
    </source>
</evidence>
<sequence>MRRKIIAANWKMYKTCAETESFIKEFKELSKGYEEKEIVICPPFTSLYVANKLLEDTPIKLGAQNMFWEKEGAYTGEISPIMLKDLNCSYVIIGHSERRQYFSETNDMINKKLKSAFEYELIPIFCVGEKWEEREKGKTEEVITEQVKKGLQGLEKEKVEKIVIAYEPVWAIGTGHSAKGEDANEVAKLIRRIISEIYDEEVSQKVRIQYGGSVNPQNIKEFLAQSEIDGALVGGASLKPQSFWDIVRS</sequence>
<organism>
    <name type="scientific">Dictyoglomus turgidum (strain DSM 6724 / Z-1310)</name>
    <dbReference type="NCBI Taxonomy" id="515635"/>
    <lineage>
        <taxon>Bacteria</taxon>
        <taxon>Pseudomonadati</taxon>
        <taxon>Dictyoglomota</taxon>
        <taxon>Dictyoglomia</taxon>
        <taxon>Dictyoglomales</taxon>
        <taxon>Dictyoglomaceae</taxon>
        <taxon>Dictyoglomus</taxon>
    </lineage>
</organism>
<name>TPIS_DICTD</name>
<protein>
    <recommendedName>
        <fullName evidence="1">Triosephosphate isomerase</fullName>
        <shortName evidence="1">TIM</shortName>
        <shortName evidence="1">TPI</shortName>
        <ecNumber evidence="1">5.3.1.1</ecNumber>
    </recommendedName>
    <alternativeName>
        <fullName evidence="1">Triose-phosphate isomerase</fullName>
    </alternativeName>
</protein>
<keyword id="KW-0963">Cytoplasm</keyword>
<keyword id="KW-0312">Gluconeogenesis</keyword>
<keyword id="KW-0324">Glycolysis</keyword>
<keyword id="KW-0413">Isomerase</keyword>
<keyword id="KW-1185">Reference proteome</keyword>
<dbReference type="EC" id="5.3.1.1" evidence="1"/>
<dbReference type="EMBL" id="CP001251">
    <property type="protein sequence ID" value="ACK42412.1"/>
    <property type="molecule type" value="Genomic_DNA"/>
</dbReference>
<dbReference type="RefSeq" id="WP_012583495.1">
    <property type="nucleotide sequence ID" value="NC_011661.1"/>
</dbReference>
<dbReference type="RefSeq" id="YP_002353026.1">
    <property type="nucleotide sequence ID" value="NC_011661.1"/>
</dbReference>
<dbReference type="SMR" id="B8E2R2"/>
<dbReference type="FunCoup" id="B8E2R2">
    <property type="interactions" value="349"/>
</dbReference>
<dbReference type="STRING" id="515635.Dtur_1133"/>
<dbReference type="EnsemblBacteria" id="ACK42412">
    <property type="protein sequence ID" value="ACK42412"/>
    <property type="gene ID" value="Dtur_1133"/>
</dbReference>
<dbReference type="KEGG" id="dtu:Dtur_1133"/>
<dbReference type="PATRIC" id="fig|515635.4.peg.1170"/>
<dbReference type="eggNOG" id="COG0149">
    <property type="taxonomic scope" value="Bacteria"/>
</dbReference>
<dbReference type="HOGENOM" id="CLU_024251_2_3_0"/>
<dbReference type="InParanoid" id="B8E2R2"/>
<dbReference type="OrthoDB" id="9809429at2"/>
<dbReference type="UniPathway" id="UPA00109">
    <property type="reaction ID" value="UER00189"/>
</dbReference>
<dbReference type="UniPathway" id="UPA00138"/>
<dbReference type="Proteomes" id="UP000007719">
    <property type="component" value="Chromosome"/>
</dbReference>
<dbReference type="GO" id="GO:0005829">
    <property type="term" value="C:cytosol"/>
    <property type="evidence" value="ECO:0000318"/>
    <property type="project" value="GO_Central"/>
</dbReference>
<dbReference type="GO" id="GO:0004807">
    <property type="term" value="F:triose-phosphate isomerase activity"/>
    <property type="evidence" value="ECO:0000318"/>
    <property type="project" value="GO_Central"/>
</dbReference>
<dbReference type="GO" id="GO:0006094">
    <property type="term" value="P:gluconeogenesis"/>
    <property type="evidence" value="ECO:0000318"/>
    <property type="project" value="GO_Central"/>
</dbReference>
<dbReference type="GO" id="GO:0046166">
    <property type="term" value="P:glyceraldehyde-3-phosphate biosynthetic process"/>
    <property type="evidence" value="ECO:0000318"/>
    <property type="project" value="GO_Central"/>
</dbReference>
<dbReference type="GO" id="GO:0019563">
    <property type="term" value="P:glycerol catabolic process"/>
    <property type="evidence" value="ECO:0000318"/>
    <property type="project" value="GO_Central"/>
</dbReference>
<dbReference type="GO" id="GO:0006096">
    <property type="term" value="P:glycolytic process"/>
    <property type="evidence" value="ECO:0000318"/>
    <property type="project" value="GO_Central"/>
</dbReference>
<dbReference type="CDD" id="cd00311">
    <property type="entry name" value="TIM"/>
    <property type="match status" value="1"/>
</dbReference>
<dbReference type="FunFam" id="3.20.20.70:FF:000016">
    <property type="entry name" value="Triosephosphate isomerase"/>
    <property type="match status" value="1"/>
</dbReference>
<dbReference type="Gene3D" id="3.20.20.70">
    <property type="entry name" value="Aldolase class I"/>
    <property type="match status" value="1"/>
</dbReference>
<dbReference type="HAMAP" id="MF_00147_B">
    <property type="entry name" value="TIM_B"/>
    <property type="match status" value="1"/>
</dbReference>
<dbReference type="InterPro" id="IPR013785">
    <property type="entry name" value="Aldolase_TIM"/>
</dbReference>
<dbReference type="InterPro" id="IPR035990">
    <property type="entry name" value="TIM_sf"/>
</dbReference>
<dbReference type="InterPro" id="IPR022896">
    <property type="entry name" value="TrioseP_Isoase_bac/euk"/>
</dbReference>
<dbReference type="InterPro" id="IPR000652">
    <property type="entry name" value="Triosephosphate_isomerase"/>
</dbReference>
<dbReference type="InterPro" id="IPR020861">
    <property type="entry name" value="Triosephosphate_isomerase_AS"/>
</dbReference>
<dbReference type="NCBIfam" id="TIGR00419">
    <property type="entry name" value="tim"/>
    <property type="match status" value="1"/>
</dbReference>
<dbReference type="PANTHER" id="PTHR21139">
    <property type="entry name" value="TRIOSEPHOSPHATE ISOMERASE"/>
    <property type="match status" value="1"/>
</dbReference>
<dbReference type="PANTHER" id="PTHR21139:SF42">
    <property type="entry name" value="TRIOSEPHOSPHATE ISOMERASE"/>
    <property type="match status" value="1"/>
</dbReference>
<dbReference type="Pfam" id="PF00121">
    <property type="entry name" value="TIM"/>
    <property type="match status" value="1"/>
</dbReference>
<dbReference type="SUPFAM" id="SSF51351">
    <property type="entry name" value="Triosephosphate isomerase (TIM)"/>
    <property type="match status" value="1"/>
</dbReference>
<dbReference type="PROSITE" id="PS00171">
    <property type="entry name" value="TIM_1"/>
    <property type="match status" value="1"/>
</dbReference>
<dbReference type="PROSITE" id="PS51440">
    <property type="entry name" value="TIM_2"/>
    <property type="match status" value="1"/>
</dbReference>
<reference key="1">
    <citation type="journal article" date="2016" name="Front. Microbiol.">
        <title>The complete genome sequence of hyperthermophile Dictyoglomus turgidum DSM 6724 reveals a specialized carbohydrate fermentor.</title>
        <authorList>
            <person name="Brumm P.J."/>
            <person name="Gowda K."/>
            <person name="Robb F.T."/>
            <person name="Mead D.A."/>
        </authorList>
    </citation>
    <scope>NUCLEOTIDE SEQUENCE [LARGE SCALE GENOMIC DNA]</scope>
    <source>
        <strain>DSM 6724 / Z-1310</strain>
    </source>
</reference>